<proteinExistence type="inferred from homology"/>
<sequence length="297" mass="32295">MSPKDLTIPTGADGEGSVQVHLDEADKITGAKVFAVYGKGGIGKSTTSSNLSAAFSILGKRVLQIGCDPKHDSTFTLTGSLVPTVIDVLKDVDFHPEELRPEDFVFEGFNGVMCVEAGGPPAGTGCGGYVVGQTVKLLKQHHLLDDTDVVIFDVLGDVVCGGFAAPLQHADQAVVVTANDFDSIYAMNRIIAAVQAKSKNYKVRLAGCVANRSRATDEVDRFCKETNFRRLAHMPDLDAIRRSRLKKKTLFEMDEDQDVLAARAEYIRLAESLWRGLDPIDPHSLPDRDIFELLGFD</sequence>
<protein>
    <recommendedName>
        <fullName evidence="1">Light-independent protochlorophyllide reductase iron-sulfur ATP-binding protein</fullName>
        <shortName evidence="1">DPOR subunit L</shortName>
        <shortName evidence="1">LI-POR subunit L</shortName>
        <ecNumber evidence="1">1.3.7.7</ecNumber>
    </recommendedName>
</protein>
<name>BCHL_CERS1</name>
<comment type="function">
    <text evidence="1">Component of the dark-operative protochlorophyllide reductase (DPOR) that uses Mg-ATP and reduced ferredoxin to reduce ring D of protochlorophyllide (Pchlide) to form chlorophyllide a (Chlide). This reaction is light-independent. The L component serves as a unique electron donor to the NB-component of the complex, and binds Mg-ATP.</text>
</comment>
<comment type="catalytic activity">
    <reaction evidence="1">
        <text>chlorophyllide a + oxidized 2[4Fe-4S]-[ferredoxin] + 2 ADP + 2 phosphate = protochlorophyllide a + reduced 2[4Fe-4S]-[ferredoxin] + 2 ATP + 2 H2O</text>
        <dbReference type="Rhea" id="RHEA:28202"/>
        <dbReference type="Rhea" id="RHEA-COMP:10002"/>
        <dbReference type="Rhea" id="RHEA-COMP:10004"/>
        <dbReference type="ChEBI" id="CHEBI:15377"/>
        <dbReference type="ChEBI" id="CHEBI:30616"/>
        <dbReference type="ChEBI" id="CHEBI:33722"/>
        <dbReference type="ChEBI" id="CHEBI:33723"/>
        <dbReference type="ChEBI" id="CHEBI:43474"/>
        <dbReference type="ChEBI" id="CHEBI:83348"/>
        <dbReference type="ChEBI" id="CHEBI:83350"/>
        <dbReference type="ChEBI" id="CHEBI:456216"/>
        <dbReference type="EC" id="1.3.7.7"/>
    </reaction>
</comment>
<comment type="cofactor">
    <cofactor evidence="1">
        <name>[4Fe-4S] cluster</name>
        <dbReference type="ChEBI" id="CHEBI:49883"/>
    </cofactor>
    <text evidence="1">Binds 1 [4Fe-4S] cluster per dimer.</text>
</comment>
<comment type="pathway">
    <text evidence="1">Porphyrin-containing compound metabolism; bacteriochlorophyll biosynthesis (light-independent).</text>
</comment>
<comment type="subunit">
    <text evidence="1">Homodimer. Protochlorophyllide reductase is composed of three subunits; BchL, BchN and BchB.</text>
</comment>
<comment type="similarity">
    <text evidence="1">Belongs to the NifH/BchL/ChlL family.</text>
</comment>
<accession>A3PL19</accession>
<evidence type="ECO:0000255" key="1">
    <source>
        <dbReference type="HAMAP-Rule" id="MF_00355"/>
    </source>
</evidence>
<keyword id="KW-0004">4Fe-4S</keyword>
<keyword id="KW-0067">ATP-binding</keyword>
<keyword id="KW-0077">Bacteriochlorophyll biosynthesis</keyword>
<keyword id="KW-0149">Chlorophyll biosynthesis</keyword>
<keyword id="KW-0408">Iron</keyword>
<keyword id="KW-0411">Iron-sulfur</keyword>
<keyword id="KW-0460">Magnesium</keyword>
<keyword id="KW-0479">Metal-binding</keyword>
<keyword id="KW-0547">Nucleotide-binding</keyword>
<keyword id="KW-0560">Oxidoreductase</keyword>
<keyword id="KW-0602">Photosynthesis</keyword>
<gene>
    <name evidence="1" type="primary">bchL</name>
    <name type="ordered locus">Rsph17029_1931</name>
</gene>
<organism>
    <name type="scientific">Cereibacter sphaeroides (strain ATCC 17029 / ATH 2.4.9)</name>
    <name type="common">Rhodobacter sphaeroides</name>
    <dbReference type="NCBI Taxonomy" id="349101"/>
    <lineage>
        <taxon>Bacteria</taxon>
        <taxon>Pseudomonadati</taxon>
        <taxon>Pseudomonadota</taxon>
        <taxon>Alphaproteobacteria</taxon>
        <taxon>Rhodobacterales</taxon>
        <taxon>Paracoccaceae</taxon>
        <taxon>Cereibacter</taxon>
    </lineage>
</organism>
<reference key="1">
    <citation type="submission" date="2007-02" db="EMBL/GenBank/DDBJ databases">
        <title>Complete sequence of chromosome 1 of Rhodobacter sphaeroides ATCC 17029.</title>
        <authorList>
            <person name="Copeland A."/>
            <person name="Lucas S."/>
            <person name="Lapidus A."/>
            <person name="Barry K."/>
            <person name="Detter J.C."/>
            <person name="Glavina del Rio T."/>
            <person name="Hammon N."/>
            <person name="Israni S."/>
            <person name="Dalin E."/>
            <person name="Tice H."/>
            <person name="Pitluck S."/>
            <person name="Kiss H."/>
            <person name="Brettin T."/>
            <person name="Bruce D."/>
            <person name="Han C."/>
            <person name="Tapia R."/>
            <person name="Gilna P."/>
            <person name="Schmutz J."/>
            <person name="Larimer F."/>
            <person name="Land M."/>
            <person name="Hauser L."/>
            <person name="Kyrpides N."/>
            <person name="Mikhailova N."/>
            <person name="Richardson P."/>
            <person name="Mackenzie C."/>
            <person name="Choudhary M."/>
            <person name="Donohue T.J."/>
            <person name="Kaplan S."/>
        </authorList>
    </citation>
    <scope>NUCLEOTIDE SEQUENCE [LARGE SCALE GENOMIC DNA]</scope>
    <source>
        <strain>ATCC 17029 / ATH 2.4.9</strain>
    </source>
</reference>
<feature type="chain" id="PRO_1000048466" description="Light-independent protochlorophyllide reductase iron-sulfur ATP-binding protein">
    <location>
        <begin position="1"/>
        <end position="297"/>
    </location>
</feature>
<feature type="binding site" evidence="1">
    <location>
        <begin position="41"/>
        <end position="46"/>
    </location>
    <ligand>
        <name>ATP</name>
        <dbReference type="ChEBI" id="CHEBI:30616"/>
    </ligand>
</feature>
<feature type="binding site" evidence="1">
    <location>
        <position position="45"/>
    </location>
    <ligand>
        <name>Mg(2+)</name>
        <dbReference type="ChEBI" id="CHEBI:18420"/>
    </ligand>
</feature>
<feature type="binding site" evidence="1">
    <location>
        <position position="70"/>
    </location>
    <ligand>
        <name>ATP</name>
        <dbReference type="ChEBI" id="CHEBI:30616"/>
    </ligand>
</feature>
<feature type="binding site" evidence="1">
    <location>
        <position position="126"/>
    </location>
    <ligand>
        <name>[4Fe-4S] cluster</name>
        <dbReference type="ChEBI" id="CHEBI:49883"/>
        <note>ligand shared between dimeric partners</note>
    </ligand>
</feature>
<feature type="binding site" evidence="1">
    <location>
        <position position="160"/>
    </location>
    <ligand>
        <name>[4Fe-4S] cluster</name>
        <dbReference type="ChEBI" id="CHEBI:49883"/>
        <note>ligand shared between dimeric partners</note>
    </ligand>
</feature>
<feature type="binding site" evidence="1">
    <location>
        <begin position="211"/>
        <end position="212"/>
    </location>
    <ligand>
        <name>ATP</name>
        <dbReference type="ChEBI" id="CHEBI:30616"/>
    </ligand>
</feature>
<feature type="binding site" evidence="1">
    <location>
        <begin position="235"/>
        <end position="237"/>
    </location>
    <ligand>
        <name>ATP</name>
        <dbReference type="ChEBI" id="CHEBI:30616"/>
    </ligand>
</feature>
<dbReference type="EC" id="1.3.7.7" evidence="1"/>
<dbReference type="EMBL" id="CP000577">
    <property type="protein sequence ID" value="ABN77035.1"/>
    <property type="molecule type" value="Genomic_DNA"/>
</dbReference>
<dbReference type="RefSeq" id="WP_011338126.1">
    <property type="nucleotide sequence ID" value="NC_009049.1"/>
</dbReference>
<dbReference type="SMR" id="A3PL19"/>
<dbReference type="GeneID" id="67447021"/>
<dbReference type="KEGG" id="rsh:Rsph17029_1931"/>
<dbReference type="HOGENOM" id="CLU_059373_2_0_5"/>
<dbReference type="UniPathway" id="UPA00671"/>
<dbReference type="GO" id="GO:0051539">
    <property type="term" value="F:4 iron, 4 sulfur cluster binding"/>
    <property type="evidence" value="ECO:0007669"/>
    <property type="project" value="UniProtKB-UniRule"/>
</dbReference>
<dbReference type="GO" id="GO:0005524">
    <property type="term" value="F:ATP binding"/>
    <property type="evidence" value="ECO:0007669"/>
    <property type="project" value="UniProtKB-UniRule"/>
</dbReference>
<dbReference type="GO" id="GO:0046872">
    <property type="term" value="F:metal ion binding"/>
    <property type="evidence" value="ECO:0007669"/>
    <property type="project" value="UniProtKB-KW"/>
</dbReference>
<dbReference type="GO" id="GO:0016730">
    <property type="term" value="F:oxidoreductase activity, acting on iron-sulfur proteins as donors"/>
    <property type="evidence" value="ECO:0007669"/>
    <property type="project" value="InterPro"/>
</dbReference>
<dbReference type="GO" id="GO:0016636">
    <property type="term" value="F:oxidoreductase activity, acting on the CH-CH group of donors, iron-sulfur protein as acceptor"/>
    <property type="evidence" value="ECO:0007669"/>
    <property type="project" value="UniProtKB-UniRule"/>
</dbReference>
<dbReference type="GO" id="GO:0036070">
    <property type="term" value="P:light-independent bacteriochlorophyll biosynthetic process"/>
    <property type="evidence" value="ECO:0007669"/>
    <property type="project" value="UniProtKB-UniRule"/>
</dbReference>
<dbReference type="GO" id="GO:0019685">
    <property type="term" value="P:photosynthesis, dark reaction"/>
    <property type="evidence" value="ECO:0007669"/>
    <property type="project" value="InterPro"/>
</dbReference>
<dbReference type="CDD" id="cd02032">
    <property type="entry name" value="Bchl-like"/>
    <property type="match status" value="1"/>
</dbReference>
<dbReference type="Gene3D" id="3.40.50.300">
    <property type="entry name" value="P-loop containing nucleotide triphosphate hydrolases"/>
    <property type="match status" value="1"/>
</dbReference>
<dbReference type="HAMAP" id="MF_00355">
    <property type="entry name" value="ChlL_BchL"/>
    <property type="match status" value="1"/>
</dbReference>
<dbReference type="InterPro" id="IPR030655">
    <property type="entry name" value="NifH/chlL_CS"/>
</dbReference>
<dbReference type="InterPro" id="IPR000392">
    <property type="entry name" value="NifH/frxC"/>
</dbReference>
<dbReference type="InterPro" id="IPR027417">
    <property type="entry name" value="P-loop_NTPase"/>
</dbReference>
<dbReference type="InterPro" id="IPR005971">
    <property type="entry name" value="Protochlorophyllide_ATP-bd"/>
</dbReference>
<dbReference type="NCBIfam" id="TIGR01281">
    <property type="entry name" value="DPOR_bchL"/>
    <property type="match status" value="1"/>
</dbReference>
<dbReference type="PANTHER" id="PTHR42864">
    <property type="entry name" value="LIGHT-INDEPENDENT PROTOCHLOROPHYLLIDE REDUCTASE IRON-SULFUR ATP-BINDING PROTEIN"/>
    <property type="match status" value="1"/>
</dbReference>
<dbReference type="PANTHER" id="PTHR42864:SF2">
    <property type="entry name" value="LIGHT-INDEPENDENT PROTOCHLOROPHYLLIDE REDUCTASE IRON-SULFUR ATP-BINDING PROTEIN"/>
    <property type="match status" value="1"/>
</dbReference>
<dbReference type="Pfam" id="PF00142">
    <property type="entry name" value="Fer4_NifH"/>
    <property type="match status" value="1"/>
</dbReference>
<dbReference type="PIRSF" id="PIRSF000363">
    <property type="entry name" value="Nitrogenase_iron"/>
    <property type="match status" value="1"/>
</dbReference>
<dbReference type="PRINTS" id="PR00091">
    <property type="entry name" value="NITROGNASEII"/>
</dbReference>
<dbReference type="SUPFAM" id="SSF52540">
    <property type="entry name" value="P-loop containing nucleoside triphosphate hydrolases"/>
    <property type="match status" value="1"/>
</dbReference>
<dbReference type="PROSITE" id="PS00746">
    <property type="entry name" value="NIFH_FRXC_1"/>
    <property type="match status" value="1"/>
</dbReference>
<dbReference type="PROSITE" id="PS00692">
    <property type="entry name" value="NIFH_FRXC_2"/>
    <property type="match status" value="1"/>
</dbReference>
<dbReference type="PROSITE" id="PS51026">
    <property type="entry name" value="NIFH_FRXC_3"/>
    <property type="match status" value="1"/>
</dbReference>